<comment type="function">
    <text evidence="1">Catalyzes the condensation of the acetyl group of acetyl-CoA with 3-methyl-2-oxobutanoate (2-ketoisovalerate) to form 3-carboxy-3-hydroxy-4-methylpentanoate (2-isopropylmalate).</text>
</comment>
<comment type="catalytic activity">
    <reaction evidence="1">
        <text>3-methyl-2-oxobutanoate + acetyl-CoA + H2O = (2S)-2-isopropylmalate + CoA + H(+)</text>
        <dbReference type="Rhea" id="RHEA:21524"/>
        <dbReference type="ChEBI" id="CHEBI:1178"/>
        <dbReference type="ChEBI" id="CHEBI:11851"/>
        <dbReference type="ChEBI" id="CHEBI:15377"/>
        <dbReference type="ChEBI" id="CHEBI:15378"/>
        <dbReference type="ChEBI" id="CHEBI:57287"/>
        <dbReference type="ChEBI" id="CHEBI:57288"/>
        <dbReference type="EC" id="2.3.3.13"/>
    </reaction>
</comment>
<comment type="cofactor">
    <cofactor evidence="1">
        <name>Mg(2+)</name>
        <dbReference type="ChEBI" id="CHEBI:18420"/>
    </cofactor>
</comment>
<comment type="pathway">
    <text evidence="1">Amino-acid biosynthesis; L-leucine biosynthesis; L-leucine from 3-methyl-2-oxobutanoate: step 1/4.</text>
</comment>
<comment type="subunit">
    <text evidence="1">Homodimer.</text>
</comment>
<comment type="subcellular location">
    <subcellularLocation>
        <location evidence="1">Cytoplasm</location>
    </subcellularLocation>
</comment>
<comment type="similarity">
    <text evidence="1">Belongs to the alpha-IPM synthase/homocitrate synthase family. LeuA type 2 subfamily.</text>
</comment>
<name>LEU1_STRRD</name>
<gene>
    <name evidence="1" type="primary">leuA</name>
    <name type="ordered locus">Sros_3794</name>
</gene>
<keyword id="KW-0028">Amino-acid biosynthesis</keyword>
<keyword id="KW-0100">Branched-chain amino acid biosynthesis</keyword>
<keyword id="KW-0963">Cytoplasm</keyword>
<keyword id="KW-0432">Leucine biosynthesis</keyword>
<keyword id="KW-0460">Magnesium</keyword>
<keyword id="KW-0479">Metal-binding</keyword>
<keyword id="KW-1185">Reference proteome</keyword>
<keyword id="KW-0808">Transferase</keyword>
<accession>D2ATJ4</accession>
<reference key="1">
    <citation type="journal article" date="2010" name="Stand. Genomic Sci.">
        <title>Complete genome sequence of Streptosporangium roseum type strain (NI 9100).</title>
        <authorList>
            <person name="Nolan M."/>
            <person name="Sikorski J."/>
            <person name="Jando M."/>
            <person name="Lucas S."/>
            <person name="Lapidus A."/>
            <person name="Glavina Del Rio T."/>
            <person name="Chen F."/>
            <person name="Tice H."/>
            <person name="Pitluck S."/>
            <person name="Cheng J.F."/>
            <person name="Chertkov O."/>
            <person name="Sims D."/>
            <person name="Meincke L."/>
            <person name="Brettin T."/>
            <person name="Han C."/>
            <person name="Detter J.C."/>
            <person name="Bruce D."/>
            <person name="Goodwin L."/>
            <person name="Land M."/>
            <person name="Hauser L."/>
            <person name="Chang Y.J."/>
            <person name="Jeffries C.D."/>
            <person name="Ivanova N."/>
            <person name="Mavromatis K."/>
            <person name="Mikhailova N."/>
            <person name="Chen A."/>
            <person name="Palaniappan K."/>
            <person name="Chain P."/>
            <person name="Rohde M."/>
            <person name="Goker M."/>
            <person name="Bristow J."/>
            <person name="Eisen J.A."/>
            <person name="Markowitz V."/>
            <person name="Hugenholtz P."/>
            <person name="Kyrpides N.C."/>
            <person name="Klenk H.P."/>
        </authorList>
    </citation>
    <scope>NUCLEOTIDE SEQUENCE [LARGE SCALE GENOMIC DNA]</scope>
    <source>
        <strain>ATCC 12428 / DSM 43021 / JCM 3005 / KCTC 9067 / NCIMB 10171 / NRRL 2505 / NI 9100</strain>
    </source>
</reference>
<organism>
    <name type="scientific">Streptosporangium roseum (strain ATCC 12428 / DSM 43021 / JCM 3005 / KCTC 9067 / NCIMB 10171 / NRRL 2505 / NI 9100)</name>
    <dbReference type="NCBI Taxonomy" id="479432"/>
    <lineage>
        <taxon>Bacteria</taxon>
        <taxon>Bacillati</taxon>
        <taxon>Actinomycetota</taxon>
        <taxon>Actinomycetes</taxon>
        <taxon>Streptosporangiales</taxon>
        <taxon>Streptosporangiaceae</taxon>
        <taxon>Streptosporangium</taxon>
    </lineage>
</organism>
<sequence>MKTTTRQTGRYGAFTPVPLPGRTWPNNIIGSAPRWLSTDLRDGNQSLATPMSPDRKLAMFELLVSMGYKEIEVGFPVASQDDFDFLRVLIEQERIPEDVRISVLVQARDELIRRTVESLEGAPRATIHLYNATSPLFRRVVFGMSRNECKDLAVQGTRLMMKYAEKTLGDCDLGFQYSPELFSDTELDFSLEVCEAVMDVWQPEPGRGIILNFPTTVERSLPNVFADQIEWLSRNLSRREHVCLSIHPHNDRGTAVASAELALLAGAERIEGCLFGNGERAGNVCLVTLGLNMFTHGVDPGIDFSDINEIRRTVERCNGLAVHPRHPYGGDLVYTSFSGSHQDAIKKGFDALEREAAHRGAAVGDLPWEMPYLPLDPEDVGRTYEAVVRINSQSGKGGVAYVMSAWHGLNLPRDLQIDFAHVVQSQADAEGGEITPDRVKRLFEREYLSSSDLPVPLASGTELVTTSLHIDGERFDVGADRADTVQAVRATLTRWGFDVRAVHRTGIAGQDRGPDADVAVYAECRVEGRVSWGVGIDRDIEAASLAAVRSAVIRARLKRLPARGGEATGIVAPLVAAGR</sequence>
<evidence type="ECO:0000255" key="1">
    <source>
        <dbReference type="HAMAP-Rule" id="MF_00572"/>
    </source>
</evidence>
<feature type="chain" id="PRO_0000406879" description="2-isopropylmalate synthase">
    <location>
        <begin position="1"/>
        <end position="579"/>
    </location>
</feature>
<feature type="domain" description="Pyruvate carboxyltransferase" evidence="1">
    <location>
        <begin position="33"/>
        <end position="308"/>
    </location>
</feature>
<feature type="region of interest" description="Regulatory domain" evidence="1">
    <location>
        <begin position="450"/>
        <end position="579"/>
    </location>
</feature>
<feature type="binding site" evidence="1">
    <location>
        <position position="42"/>
    </location>
    <ligand>
        <name>Mg(2+)</name>
        <dbReference type="ChEBI" id="CHEBI:18420"/>
    </ligand>
</feature>
<feature type="binding site" evidence="1">
    <location>
        <position position="247"/>
    </location>
    <ligand>
        <name>Mg(2+)</name>
        <dbReference type="ChEBI" id="CHEBI:18420"/>
    </ligand>
</feature>
<feature type="binding site" evidence="1">
    <location>
        <position position="249"/>
    </location>
    <ligand>
        <name>Mg(2+)</name>
        <dbReference type="ChEBI" id="CHEBI:18420"/>
    </ligand>
</feature>
<feature type="binding site" evidence="1">
    <location>
        <position position="283"/>
    </location>
    <ligand>
        <name>Mg(2+)</name>
        <dbReference type="ChEBI" id="CHEBI:18420"/>
    </ligand>
</feature>
<proteinExistence type="inferred from homology"/>
<dbReference type="EC" id="2.3.3.13" evidence="1"/>
<dbReference type="EMBL" id="CP001814">
    <property type="protein sequence ID" value="ACZ86714.1"/>
    <property type="molecule type" value="Genomic_DNA"/>
</dbReference>
<dbReference type="SMR" id="D2ATJ4"/>
<dbReference type="STRING" id="479432.Sros_3794"/>
<dbReference type="KEGG" id="sro:Sros_3794"/>
<dbReference type="eggNOG" id="COG0119">
    <property type="taxonomic scope" value="Bacteria"/>
</dbReference>
<dbReference type="HOGENOM" id="CLU_004588_3_0_11"/>
<dbReference type="OrthoDB" id="9803573at2"/>
<dbReference type="UniPathway" id="UPA00048">
    <property type="reaction ID" value="UER00070"/>
</dbReference>
<dbReference type="Proteomes" id="UP000002029">
    <property type="component" value="Chromosome"/>
</dbReference>
<dbReference type="GO" id="GO:0005737">
    <property type="term" value="C:cytoplasm"/>
    <property type="evidence" value="ECO:0007669"/>
    <property type="project" value="UniProtKB-SubCell"/>
</dbReference>
<dbReference type="GO" id="GO:0003852">
    <property type="term" value="F:2-isopropylmalate synthase activity"/>
    <property type="evidence" value="ECO:0007669"/>
    <property type="project" value="UniProtKB-UniRule"/>
</dbReference>
<dbReference type="GO" id="GO:0003985">
    <property type="term" value="F:acetyl-CoA C-acetyltransferase activity"/>
    <property type="evidence" value="ECO:0007669"/>
    <property type="project" value="UniProtKB-UniRule"/>
</dbReference>
<dbReference type="GO" id="GO:0000287">
    <property type="term" value="F:magnesium ion binding"/>
    <property type="evidence" value="ECO:0007669"/>
    <property type="project" value="UniProtKB-UniRule"/>
</dbReference>
<dbReference type="GO" id="GO:0009098">
    <property type="term" value="P:L-leucine biosynthetic process"/>
    <property type="evidence" value="ECO:0007669"/>
    <property type="project" value="UniProtKB-UniRule"/>
</dbReference>
<dbReference type="CDD" id="cd07942">
    <property type="entry name" value="DRE_TIM_LeuA"/>
    <property type="match status" value="1"/>
</dbReference>
<dbReference type="Gene3D" id="3.30.160.270">
    <property type="match status" value="1"/>
</dbReference>
<dbReference type="Gene3D" id="3.20.20.70">
    <property type="entry name" value="Aldolase class I"/>
    <property type="match status" value="1"/>
</dbReference>
<dbReference type="HAMAP" id="MF_00572">
    <property type="entry name" value="LeuA_type2"/>
    <property type="match status" value="1"/>
</dbReference>
<dbReference type="InterPro" id="IPR013709">
    <property type="entry name" value="2-isopropylmalate_synth_dimer"/>
</dbReference>
<dbReference type="InterPro" id="IPR002034">
    <property type="entry name" value="AIPM/Hcit_synth_CS"/>
</dbReference>
<dbReference type="InterPro" id="IPR013785">
    <property type="entry name" value="Aldolase_TIM"/>
</dbReference>
<dbReference type="InterPro" id="IPR005668">
    <property type="entry name" value="IPM_Synthase"/>
</dbReference>
<dbReference type="InterPro" id="IPR054692">
    <property type="entry name" value="LeuA-like_post-cat"/>
</dbReference>
<dbReference type="InterPro" id="IPR036230">
    <property type="entry name" value="LeuA_allosteric_dom_sf"/>
</dbReference>
<dbReference type="InterPro" id="IPR039371">
    <property type="entry name" value="LeuA_N_DRE-TIM"/>
</dbReference>
<dbReference type="InterPro" id="IPR000891">
    <property type="entry name" value="PYR_CT"/>
</dbReference>
<dbReference type="NCBIfam" id="TIGR00970">
    <property type="entry name" value="leuA_yeast"/>
    <property type="match status" value="1"/>
</dbReference>
<dbReference type="NCBIfam" id="NF002991">
    <property type="entry name" value="PRK03739.1"/>
    <property type="match status" value="1"/>
</dbReference>
<dbReference type="PANTHER" id="PTHR46911">
    <property type="match status" value="1"/>
</dbReference>
<dbReference type="PANTHER" id="PTHR46911:SF1">
    <property type="entry name" value="2-ISOPROPYLMALATE SYNTHASE"/>
    <property type="match status" value="1"/>
</dbReference>
<dbReference type="Pfam" id="PF00682">
    <property type="entry name" value="HMGL-like"/>
    <property type="match status" value="1"/>
</dbReference>
<dbReference type="Pfam" id="PF22615">
    <property type="entry name" value="IPMS_D2"/>
    <property type="match status" value="1"/>
</dbReference>
<dbReference type="SMART" id="SM00917">
    <property type="entry name" value="LeuA_dimer"/>
    <property type="match status" value="1"/>
</dbReference>
<dbReference type="SUPFAM" id="SSF110921">
    <property type="entry name" value="2-isopropylmalate synthase LeuA, allosteric (dimerisation) domain"/>
    <property type="match status" value="1"/>
</dbReference>
<dbReference type="SUPFAM" id="SSF51569">
    <property type="entry name" value="Aldolase"/>
    <property type="match status" value="1"/>
</dbReference>
<dbReference type="SUPFAM" id="SSF89000">
    <property type="entry name" value="post-HMGL domain-like"/>
    <property type="match status" value="1"/>
</dbReference>
<dbReference type="PROSITE" id="PS00815">
    <property type="entry name" value="AIPM_HOMOCIT_SYNTH_1"/>
    <property type="match status" value="1"/>
</dbReference>
<dbReference type="PROSITE" id="PS00816">
    <property type="entry name" value="AIPM_HOMOCIT_SYNTH_2"/>
    <property type="match status" value="1"/>
</dbReference>
<dbReference type="PROSITE" id="PS50991">
    <property type="entry name" value="PYR_CT"/>
    <property type="match status" value="1"/>
</dbReference>
<protein>
    <recommendedName>
        <fullName evidence="1">2-isopropylmalate synthase</fullName>
        <ecNumber evidence="1">2.3.3.13</ecNumber>
    </recommendedName>
    <alternativeName>
        <fullName evidence="1">Alpha-IPM synthase</fullName>
    </alternativeName>
    <alternativeName>
        <fullName evidence="1">Alpha-isopropylmalate synthase</fullName>
    </alternativeName>
</protein>